<keyword id="KW-0256">Endoplasmic reticulum</keyword>
<keyword id="KW-0378">Hydrolase</keyword>
<keyword id="KW-0472">Membrane</keyword>
<keyword id="KW-0539">Nucleus</keyword>
<keyword id="KW-0904">Protein phosphatase</keyword>
<keyword id="KW-1185">Reference proteome</keyword>
<keyword id="KW-0812">Transmembrane</keyword>
<keyword id="KW-1133">Transmembrane helix</keyword>
<comment type="function">
    <text evidence="1">Serine/threonine protein phosphatase that may dephosphorylate and activate lipins. Lipins are phosphatidate phosphatases that catalyze the conversion of phosphatidic acid to diacylglycerol and control the metabolism of fatty acids at different levels. May indirectly modulate the lipid composition of nuclear and/or endoplasmic reticulum membranes and be required for proper nuclear membrane morphology and/or dynamics. May also indirectly regulate the production of lipid droplets and triacylglycerol. May antagonize BMP signaling (By similarity).</text>
</comment>
<comment type="catalytic activity">
    <reaction>
        <text>O-phospho-L-seryl-[protein] + H2O = L-seryl-[protein] + phosphate</text>
        <dbReference type="Rhea" id="RHEA:20629"/>
        <dbReference type="Rhea" id="RHEA-COMP:9863"/>
        <dbReference type="Rhea" id="RHEA-COMP:11604"/>
        <dbReference type="ChEBI" id="CHEBI:15377"/>
        <dbReference type="ChEBI" id="CHEBI:29999"/>
        <dbReference type="ChEBI" id="CHEBI:43474"/>
        <dbReference type="ChEBI" id="CHEBI:83421"/>
        <dbReference type="EC" id="3.1.3.16"/>
    </reaction>
</comment>
<comment type="catalytic activity">
    <reaction>
        <text>O-phospho-L-threonyl-[protein] + H2O = L-threonyl-[protein] + phosphate</text>
        <dbReference type="Rhea" id="RHEA:47004"/>
        <dbReference type="Rhea" id="RHEA-COMP:11060"/>
        <dbReference type="Rhea" id="RHEA-COMP:11605"/>
        <dbReference type="ChEBI" id="CHEBI:15377"/>
        <dbReference type="ChEBI" id="CHEBI:30013"/>
        <dbReference type="ChEBI" id="CHEBI:43474"/>
        <dbReference type="ChEBI" id="CHEBI:61977"/>
        <dbReference type="EC" id="3.1.3.16"/>
    </reaction>
</comment>
<comment type="subcellular location">
    <subcellularLocation>
        <location evidence="1">Endoplasmic reticulum membrane</location>
        <topology evidence="1">Single-pass membrane protein</topology>
    </subcellularLocation>
    <subcellularLocation>
        <location evidence="1">Nucleus membrane</location>
        <topology evidence="1">Single-pass membrane protein</topology>
    </subcellularLocation>
</comment>
<comment type="similarity">
    <text evidence="4">Belongs to the dullard family.</text>
</comment>
<organism>
    <name type="scientific">Danio rerio</name>
    <name type="common">Zebrafish</name>
    <name type="synonym">Brachydanio rerio</name>
    <dbReference type="NCBI Taxonomy" id="7955"/>
    <lineage>
        <taxon>Eukaryota</taxon>
        <taxon>Metazoa</taxon>
        <taxon>Chordata</taxon>
        <taxon>Craniata</taxon>
        <taxon>Vertebrata</taxon>
        <taxon>Euteleostomi</taxon>
        <taxon>Actinopterygii</taxon>
        <taxon>Neopterygii</taxon>
        <taxon>Teleostei</taxon>
        <taxon>Ostariophysi</taxon>
        <taxon>Cypriniformes</taxon>
        <taxon>Danionidae</taxon>
        <taxon>Danioninae</taxon>
        <taxon>Danio</taxon>
    </lineage>
</organism>
<name>CNEPB_DANRE</name>
<gene>
    <name type="primary">ctdnep1b</name>
    <name type="synonym">dullardl</name>
</gene>
<sequence>MLKTRQCLLGVRTFHGVTSRIWSFFLYILRKHIRTIIQYQTVRYDILSLSPISRNRLNNVKRKILVLDLDETLIHSHHDGVLRPTVRPGTPPDFILKVVIDKHPVRFFVHKRPHVDFFLEVVSQWYELVVFTASMEIYGSAVADKLDNNKAILKRRYYRQHCTLDSGSYIKDLSVVHDDLSSVVILDNSPGAYRSHPDNAIPIKSWFSDPSDTALLNLLPMLDALRFPADVRSVLSRNLHQHRLW</sequence>
<reference key="1">
    <citation type="submission" date="2004-11" db="EMBL/GenBank/DDBJ databases">
        <authorList>
            <consortium name="NIH - Zebrafish Gene Collection (ZGC) project"/>
        </authorList>
    </citation>
    <scope>NUCLEOTIDE SEQUENCE [LARGE SCALE MRNA]</scope>
    <source>
        <tissue>Embryo</tissue>
    </source>
</reference>
<dbReference type="EC" id="3.1.3.16"/>
<dbReference type="EMBL" id="BC085403">
    <property type="protein sequence ID" value="AAH85403.1"/>
    <property type="molecule type" value="mRNA"/>
</dbReference>
<dbReference type="SMR" id="Q5U3T3"/>
<dbReference type="FunCoup" id="Q5U3T3">
    <property type="interactions" value="1950"/>
</dbReference>
<dbReference type="STRING" id="7955.ENSDARP00000103636"/>
<dbReference type="PaxDb" id="7955-ENSDARP00000103636"/>
<dbReference type="AGR" id="ZFIN:ZDB-GENE-041114-152"/>
<dbReference type="ZFIN" id="ZDB-GENE-041114-152">
    <property type="gene designation" value="ctdnep1b"/>
</dbReference>
<dbReference type="eggNOG" id="KOG1605">
    <property type="taxonomic scope" value="Eukaryota"/>
</dbReference>
<dbReference type="InParanoid" id="Q5U3T3"/>
<dbReference type="PhylomeDB" id="Q5U3T3"/>
<dbReference type="PRO" id="PR:Q5U3T3"/>
<dbReference type="Proteomes" id="UP000000437">
    <property type="component" value="Unplaced"/>
</dbReference>
<dbReference type="GO" id="GO:0005737">
    <property type="term" value="C:cytoplasm"/>
    <property type="evidence" value="ECO:0000250"/>
    <property type="project" value="UniProtKB"/>
</dbReference>
<dbReference type="GO" id="GO:0005789">
    <property type="term" value="C:endoplasmic reticulum membrane"/>
    <property type="evidence" value="ECO:0000250"/>
    <property type="project" value="UniProtKB"/>
</dbReference>
<dbReference type="GO" id="GO:0071595">
    <property type="term" value="C:Nem1-Spo7 phosphatase complex"/>
    <property type="evidence" value="ECO:0000250"/>
    <property type="project" value="UniProtKB"/>
</dbReference>
<dbReference type="GO" id="GO:0005635">
    <property type="term" value="C:nuclear envelope"/>
    <property type="evidence" value="ECO:0000250"/>
    <property type="project" value="UniProtKB"/>
</dbReference>
<dbReference type="GO" id="GO:0031965">
    <property type="term" value="C:nuclear membrane"/>
    <property type="evidence" value="ECO:0000250"/>
    <property type="project" value="UniProtKB"/>
</dbReference>
<dbReference type="GO" id="GO:0004721">
    <property type="term" value="F:phosphoprotein phosphatase activity"/>
    <property type="evidence" value="ECO:0000250"/>
    <property type="project" value="UniProtKB"/>
</dbReference>
<dbReference type="GO" id="GO:0004722">
    <property type="term" value="F:protein serine/threonine phosphatase activity"/>
    <property type="evidence" value="ECO:0000250"/>
    <property type="project" value="UniProtKB"/>
</dbReference>
<dbReference type="GO" id="GO:0060322">
    <property type="term" value="P:head development"/>
    <property type="evidence" value="ECO:0000315"/>
    <property type="project" value="ZFIN"/>
</dbReference>
<dbReference type="GO" id="GO:0006998">
    <property type="term" value="P:nuclear envelope organization"/>
    <property type="evidence" value="ECO:0000250"/>
    <property type="project" value="UniProtKB"/>
</dbReference>
<dbReference type="GO" id="GO:0010867">
    <property type="term" value="P:positive regulation of triglyceride biosynthetic process"/>
    <property type="evidence" value="ECO:0000250"/>
    <property type="project" value="UniProtKB"/>
</dbReference>
<dbReference type="CDD" id="cd07521">
    <property type="entry name" value="HAD_FCP1-like"/>
    <property type="match status" value="1"/>
</dbReference>
<dbReference type="FunFam" id="3.40.50.1000:FF:000044">
    <property type="entry name" value="CTD nuclear envelope phosphatase 1"/>
    <property type="match status" value="1"/>
</dbReference>
<dbReference type="Gene3D" id="3.40.50.1000">
    <property type="entry name" value="HAD superfamily/HAD-like"/>
    <property type="match status" value="1"/>
</dbReference>
<dbReference type="InterPro" id="IPR011948">
    <property type="entry name" value="Dullard_phosphatase"/>
</dbReference>
<dbReference type="InterPro" id="IPR004274">
    <property type="entry name" value="FCP1_dom"/>
</dbReference>
<dbReference type="InterPro" id="IPR036412">
    <property type="entry name" value="HAD-like_sf"/>
</dbReference>
<dbReference type="InterPro" id="IPR023214">
    <property type="entry name" value="HAD_sf"/>
</dbReference>
<dbReference type="InterPro" id="IPR050365">
    <property type="entry name" value="TIM50"/>
</dbReference>
<dbReference type="NCBIfam" id="TIGR02251">
    <property type="entry name" value="HIF-SF_euk"/>
    <property type="match status" value="1"/>
</dbReference>
<dbReference type="PANTHER" id="PTHR12210">
    <property type="entry name" value="DULLARD PROTEIN PHOSPHATASE"/>
    <property type="match status" value="1"/>
</dbReference>
<dbReference type="Pfam" id="PF03031">
    <property type="entry name" value="NIF"/>
    <property type="match status" value="1"/>
</dbReference>
<dbReference type="SMART" id="SM00577">
    <property type="entry name" value="CPDc"/>
    <property type="match status" value="1"/>
</dbReference>
<dbReference type="SUPFAM" id="SSF56784">
    <property type="entry name" value="HAD-like"/>
    <property type="match status" value="1"/>
</dbReference>
<dbReference type="PROSITE" id="PS50969">
    <property type="entry name" value="FCP1"/>
    <property type="match status" value="1"/>
</dbReference>
<evidence type="ECO:0000250" key="1"/>
<evidence type="ECO:0000255" key="2"/>
<evidence type="ECO:0000255" key="3">
    <source>
        <dbReference type="PROSITE-ProRule" id="PRU00336"/>
    </source>
</evidence>
<evidence type="ECO:0000305" key="4"/>
<proteinExistence type="evidence at transcript level"/>
<feature type="chain" id="PRO_0000297971" description="CTD nuclear envelope phosphatase 1B">
    <location>
        <begin position="1"/>
        <end position="245"/>
    </location>
</feature>
<feature type="transmembrane region" description="Helical" evidence="2">
    <location>
        <begin position="7"/>
        <end position="29"/>
    </location>
</feature>
<feature type="domain" description="FCP1 homology" evidence="3">
    <location>
        <begin position="58"/>
        <end position="225"/>
    </location>
</feature>
<protein>
    <recommendedName>
        <fullName>CTD nuclear envelope phosphatase 1B</fullName>
        <ecNumber>3.1.3.16</ecNumber>
    </recommendedName>
    <alternativeName>
        <fullName>Dullard-like protein</fullName>
    </alternativeName>
    <alternativeName>
        <fullName>Serine/threonine-protein phosphatase dullard-B</fullName>
    </alternativeName>
</protein>
<accession>Q5U3T3</accession>